<keyword id="KW-0002">3D-structure</keyword>
<keyword id="KW-0274">FAD</keyword>
<keyword id="KW-0285">Flavoprotein</keyword>
<keyword id="KW-0503">Monooxygenase</keyword>
<keyword id="KW-0560">Oxidoreductase</keyword>
<reference key="1">
    <citation type="journal article" date="2008" name="Chem. Biol.">
        <title>Functional characterization of the biosynthesis of radicicol, an Hsp90 inhibitor resorcylic acid lactone from Chaetomium chiversii.</title>
        <authorList>
            <person name="Wang S."/>
            <person name="Xu Y."/>
            <person name="Maine E.A."/>
            <person name="Wijeratne E.M."/>
            <person name="Espinosa-Artiles P."/>
            <person name="Gunatilaka A.A."/>
            <person name="Molnar I."/>
        </authorList>
    </citation>
    <scope>NUCLEOTIDE SEQUENCE [GENOMIC DNA]</scope>
    <scope>FUNCTION</scope>
    <scope>DISRUPTION PHENOTYPE</scope>
    <source>
        <strain>CS-36-62</strain>
    </source>
</reference>
<organism>
    <name type="scientific">Floropilus chiversii</name>
    <name type="common">Chaetomium chiversii</name>
    <dbReference type="NCBI Taxonomy" id="2587399"/>
    <lineage>
        <taxon>Eukaryota</taxon>
        <taxon>Fungi</taxon>
        <taxon>Dikarya</taxon>
        <taxon>Ascomycota</taxon>
        <taxon>Pezizomycotina</taxon>
        <taxon>Sordariomycetes</taxon>
        <taxon>Sordariomycetidae</taxon>
        <taxon>Sordariales</taxon>
        <taxon>Chaetomiaceae</taxon>
        <taxon>Floropilus</taxon>
    </lineage>
</organism>
<sequence>MSIPKSCEVLVAGGGPAGSYAASALAREGVDVVLLEADKHPRYHIGESMLPSIRPLLRFIDLEETFEKHGFQKKLGAAFKLTAKREGYTDFVAAHGPNGYSWNVVRSESDELLFKHAAKSGALTFQGVKVDSLEFEPYDSDFPSGGKVANPGRPVAARWSAKDGRSGTISFQYLVDATGRAGITSTKYLKNRKFNEGLKNLAIWGYYKGARPWAEGTPRENQPYFEGMRDGAGWCWTIPLHNGTVSVGAVLRSDLFFAKKKSLGEDVTNAMIMAECMKLCPTIKELLEPAELVSDIKQATDYSYSASAYAGPYFRIVGDAGCFIDPFFSSGHHLAMAGALAAAVSIRASMKGDCSEYEASNWHARKVDEGYTLFLLVVMAALKQIRMQEEPVLSDIDDDGFDRAFQFLKPVIQGSGSAEIVKRFTKKEVSEAIDFAVLALDNMAGAGEHANETNGSNGTGETNGDAKTLENITVEDEKVLSGIRILAKVAPSADMKDLEGTAIDGFMPRLEHGHLGLNRV</sequence>
<comment type="function">
    <text evidence="1 3">Non-heme halogenase; part of the gene cluster that mediates the biosynthesis of radicicol, a resorcylic acid lactone (RAL) that irreversibly inhibits the HSP90 molecular chaperone, an important target for cancer chemotherapy (PubMed:19101477). The cluster encodes only two apparent post-PKS enzymes, a cytochrome P450 monooxygenase (radP) and a non-heme halogenase (radH) that introduce the epoxide and the chlorine, respectively (PubMed:19101477). If this cluster includes all the genes required for radicicol biosynthesis, the remaining structural features of radicicol are presumably generated by the PKSs rads1 and rads2 (PubMed:19101477). The C-2' ketone could arise if the R-PKS rads1 and NR-PKS rads2 each carry out four iterations, in contrast to the five iteration-three iteration split for the hypothemycin PKSs (By similarity). The origin of the cis 5',6' double bond is not known (By similarity). The radicicol R-PKS rads1 ER domain may catalyze either double bond isomerization or reduction in the third iteration (By similarity).</text>
</comment>
<comment type="pathway">
    <text evidence="3">Secondary metabolite biosynthesis.</text>
</comment>
<comment type="disruption phenotype">
    <text evidence="3">Abolishes the production of radicicol and accumulates 6-dechloro-radicicol, also known as monocillin I (PubMed:19101477).</text>
</comment>
<comment type="biotechnology">
    <text evidence="6">Radicicol is an important pharmacophore as an inhibitor of heat shock protein 90 (Hsp90), an ATP-dependent chaperone involved in the post-translational maturation and stabilization of over one hundred proteins, and which activity has been implicated in diverse pathologies ranging from oncology to neurodegenerative and infectious diseases (PubMed:19101477).</text>
</comment>
<comment type="similarity">
    <text evidence="5">Belongs to the flavin-dependent halogenase family.</text>
</comment>
<protein>
    <recommendedName>
        <fullName evidence="4">Flavin-dependent halogenase radH</fullName>
        <ecNumber evidence="6">1.14.14.-</ecNumber>
    </recommendedName>
    <alternativeName>
        <fullName evidence="4">Non-heme halogenase radH</fullName>
    </alternativeName>
    <alternativeName>
        <fullName evidence="4">Radicicol biosynthesis cluster protein radH</fullName>
    </alternativeName>
</protein>
<accession>C5H881</accession>
<gene>
    <name evidence="4" type="primary">radH</name>
</gene>
<name>RADH_FLOCH</name>
<evidence type="ECO:0000250" key="1">
    <source>
        <dbReference type="UniProtKB" id="B3FWT7"/>
    </source>
</evidence>
<evidence type="ECO:0000250" key="2">
    <source>
        <dbReference type="UniProtKB" id="P95480"/>
    </source>
</evidence>
<evidence type="ECO:0000269" key="3">
    <source>
    </source>
</evidence>
<evidence type="ECO:0000303" key="4">
    <source>
    </source>
</evidence>
<evidence type="ECO:0000305" key="5"/>
<evidence type="ECO:0000305" key="6">
    <source>
    </source>
</evidence>
<evidence type="ECO:0007829" key="7">
    <source>
        <dbReference type="PDB" id="8GU0"/>
    </source>
</evidence>
<proteinExistence type="evidence at protein level"/>
<dbReference type="EC" id="1.14.14.-" evidence="6"/>
<dbReference type="EMBL" id="EU980390">
    <property type="protein sequence ID" value="ACM42402.1"/>
    <property type="molecule type" value="Genomic_DNA"/>
</dbReference>
<dbReference type="PDB" id="8GU0">
    <property type="method" value="X-ray"/>
    <property type="resolution" value="2.42 A"/>
    <property type="chains" value="A/B=1-520"/>
</dbReference>
<dbReference type="PDBsum" id="8GU0"/>
<dbReference type="SMR" id="C5H881"/>
<dbReference type="GO" id="GO:0140907">
    <property type="term" value="F:flavin-dependent halogenase activity"/>
    <property type="evidence" value="ECO:0000315"/>
    <property type="project" value="GO_Central"/>
</dbReference>
<dbReference type="GO" id="GO:0004497">
    <property type="term" value="F:monooxygenase activity"/>
    <property type="evidence" value="ECO:0007669"/>
    <property type="project" value="UniProtKB-KW"/>
</dbReference>
<dbReference type="GO" id="GO:0044550">
    <property type="term" value="P:secondary metabolite biosynthetic process"/>
    <property type="evidence" value="ECO:0000315"/>
    <property type="project" value="GO_Central"/>
</dbReference>
<dbReference type="Gene3D" id="3.50.50.60">
    <property type="entry name" value="FAD/NAD(P)-binding domain"/>
    <property type="match status" value="1"/>
</dbReference>
<dbReference type="InterPro" id="IPR036188">
    <property type="entry name" value="FAD/NAD-bd_sf"/>
</dbReference>
<dbReference type="InterPro" id="IPR050816">
    <property type="entry name" value="Flavin-dep_Halogenase_NPB"/>
</dbReference>
<dbReference type="InterPro" id="IPR006905">
    <property type="entry name" value="Flavin_halogenase"/>
</dbReference>
<dbReference type="PANTHER" id="PTHR43747:SF5">
    <property type="entry name" value="FAD-BINDING DOMAIN-CONTAINING PROTEIN"/>
    <property type="match status" value="1"/>
</dbReference>
<dbReference type="PANTHER" id="PTHR43747">
    <property type="entry name" value="FAD-BINDING PROTEIN"/>
    <property type="match status" value="1"/>
</dbReference>
<dbReference type="Pfam" id="PF04820">
    <property type="entry name" value="Trp_halogenase"/>
    <property type="match status" value="2"/>
</dbReference>
<dbReference type="SUPFAM" id="SSF51905">
    <property type="entry name" value="FAD/NAD(P)-binding domain"/>
    <property type="match status" value="1"/>
</dbReference>
<feature type="chain" id="PRO_0000443045" description="Flavin-dependent halogenase radH">
    <location>
        <begin position="1"/>
        <end position="520"/>
    </location>
</feature>
<feature type="binding site" evidence="2">
    <location>
        <position position="14"/>
    </location>
    <ligand>
        <name>FAD</name>
        <dbReference type="ChEBI" id="CHEBI:57692"/>
    </ligand>
</feature>
<feature type="binding site" evidence="2">
    <location>
        <position position="17"/>
    </location>
    <ligand>
        <name>FAD</name>
        <dbReference type="ChEBI" id="CHEBI:57692"/>
    </ligand>
</feature>
<feature type="binding site" evidence="2">
    <location>
        <position position="47"/>
    </location>
    <ligand>
        <name>FAD</name>
        <dbReference type="ChEBI" id="CHEBI:57692"/>
    </ligand>
</feature>
<feature type="binding site" evidence="2">
    <location>
        <position position="330"/>
    </location>
    <ligand>
        <name>chloride</name>
        <dbReference type="ChEBI" id="CHEBI:17996"/>
    </ligand>
</feature>
<feature type="binding site" evidence="2">
    <location>
        <position position="331"/>
    </location>
    <ligand>
        <name>chloride</name>
        <dbReference type="ChEBI" id="CHEBI:17996"/>
    </ligand>
</feature>
<feature type="strand" evidence="7">
    <location>
        <begin position="8"/>
        <end position="12"/>
    </location>
</feature>
<feature type="helix" evidence="7">
    <location>
        <begin position="16"/>
        <end position="26"/>
    </location>
</feature>
<feature type="turn" evidence="7">
    <location>
        <begin position="27"/>
        <end position="29"/>
    </location>
</feature>
<feature type="strand" evidence="7">
    <location>
        <begin position="32"/>
        <end position="38"/>
    </location>
</feature>
<feature type="helix" evidence="7">
    <location>
        <begin position="53"/>
        <end position="59"/>
    </location>
</feature>
<feature type="helix" evidence="7">
    <location>
        <begin position="63"/>
        <end position="69"/>
    </location>
</feature>
<feature type="strand" evidence="7">
    <location>
        <begin position="72"/>
        <end position="74"/>
    </location>
</feature>
<feature type="strand" evidence="7">
    <location>
        <begin position="76"/>
        <end position="80"/>
    </location>
</feature>
<feature type="strand" evidence="7">
    <location>
        <begin position="82"/>
        <end position="84"/>
    </location>
</feature>
<feature type="strand" evidence="7">
    <location>
        <begin position="87"/>
        <end position="90"/>
    </location>
</feature>
<feature type="helix" evidence="7">
    <location>
        <begin position="91"/>
        <end position="95"/>
    </location>
</feature>
<feature type="strand" evidence="7">
    <location>
        <begin position="101"/>
        <end position="103"/>
    </location>
</feature>
<feature type="helix" evidence="7">
    <location>
        <begin position="106"/>
        <end position="119"/>
    </location>
</feature>
<feature type="strand" evidence="7">
    <location>
        <begin position="123"/>
        <end position="136"/>
    </location>
</feature>
<feature type="strand" evidence="7">
    <location>
        <begin position="146"/>
        <end position="148"/>
    </location>
</feature>
<feature type="strand" evidence="7">
    <location>
        <begin position="153"/>
        <end position="161"/>
    </location>
</feature>
<feature type="strand" evidence="7">
    <location>
        <begin position="166"/>
        <end position="170"/>
    </location>
</feature>
<feature type="strand" evidence="7">
    <location>
        <begin position="172"/>
        <end position="176"/>
    </location>
</feature>
<feature type="helix" evidence="7">
    <location>
        <begin position="183"/>
        <end position="187"/>
    </location>
</feature>
<feature type="strand" evidence="7">
    <location>
        <begin position="192"/>
        <end position="209"/>
    </location>
</feature>
<feature type="turn" evidence="7">
    <location>
        <begin position="218"/>
        <end position="221"/>
    </location>
</feature>
<feature type="strand" evidence="7">
    <location>
        <begin position="224"/>
        <end position="227"/>
    </location>
</feature>
<feature type="strand" evidence="7">
    <location>
        <begin position="231"/>
        <end position="239"/>
    </location>
</feature>
<feature type="strand" evidence="7">
    <location>
        <begin position="243"/>
        <end position="252"/>
    </location>
</feature>
<feature type="helix" evidence="7">
    <location>
        <begin position="253"/>
        <end position="257"/>
    </location>
</feature>
<feature type="helix" evidence="7">
    <location>
        <begin position="267"/>
        <end position="278"/>
    </location>
</feature>
<feature type="helix" evidence="7">
    <location>
        <begin position="281"/>
        <end position="286"/>
    </location>
</feature>
<feature type="turn" evidence="7">
    <location>
        <begin position="287"/>
        <end position="289"/>
    </location>
</feature>
<feature type="strand" evidence="7">
    <location>
        <begin position="297"/>
        <end position="311"/>
    </location>
</feature>
<feature type="strand" evidence="7">
    <location>
        <begin position="314"/>
        <end position="316"/>
    </location>
</feature>
<feature type="helix" evidence="7">
    <location>
        <begin position="318"/>
        <end position="320"/>
    </location>
</feature>
<feature type="helix" evidence="7">
    <location>
        <begin position="326"/>
        <end position="328"/>
    </location>
</feature>
<feature type="helix" evidence="7">
    <location>
        <begin position="331"/>
        <end position="350"/>
    </location>
</feature>
<feature type="helix" evidence="7">
    <location>
        <begin position="356"/>
        <end position="386"/>
    </location>
</feature>
<feature type="strand" evidence="7">
    <location>
        <begin position="387"/>
        <end position="390"/>
    </location>
</feature>
<feature type="strand" evidence="7">
    <location>
        <begin position="398"/>
        <end position="401"/>
    </location>
</feature>
<feature type="helix" evidence="7">
    <location>
        <begin position="402"/>
        <end position="407"/>
    </location>
</feature>
<feature type="helix" evidence="7">
    <location>
        <begin position="409"/>
        <end position="412"/>
    </location>
</feature>
<feature type="helix" evidence="7">
    <location>
        <begin position="426"/>
        <end position="439"/>
    </location>
</feature>
<feature type="strand" evidence="7">
    <location>
        <begin position="507"/>
        <end position="509"/>
    </location>
</feature>
<feature type="strand" evidence="7">
    <location>
        <begin position="516"/>
        <end position="518"/>
    </location>
</feature>